<protein>
    <recommendedName>
        <fullName evidence="1">ATP synthase subunit a</fullName>
    </recommendedName>
    <alternativeName>
        <fullName evidence="1">ATP synthase F0 sector subunit a</fullName>
    </alternativeName>
    <alternativeName>
        <fullName evidence="1">F-ATPase subunit 6</fullName>
    </alternativeName>
</protein>
<keyword id="KW-0066">ATP synthesis</keyword>
<keyword id="KW-0997">Cell inner membrane</keyword>
<keyword id="KW-1003">Cell membrane</keyword>
<keyword id="KW-0138">CF(0)</keyword>
<keyword id="KW-0375">Hydrogen ion transport</keyword>
<keyword id="KW-0406">Ion transport</keyword>
<keyword id="KW-0472">Membrane</keyword>
<keyword id="KW-0812">Transmembrane</keyword>
<keyword id="KW-1133">Transmembrane helix</keyword>
<keyword id="KW-0813">Transport</keyword>
<dbReference type="EMBL" id="CP000647">
    <property type="protein sequence ID" value="ABR79526.1"/>
    <property type="molecule type" value="Genomic_DNA"/>
</dbReference>
<dbReference type="SMR" id="A6TG42"/>
<dbReference type="STRING" id="272620.KPN_04143"/>
<dbReference type="PaxDb" id="272620-KPN_04143"/>
<dbReference type="EnsemblBacteria" id="ABR79526">
    <property type="protein sequence ID" value="ABR79526"/>
    <property type="gene ID" value="KPN_04143"/>
</dbReference>
<dbReference type="KEGG" id="kpn:KPN_04143"/>
<dbReference type="HOGENOM" id="CLU_041018_1_0_6"/>
<dbReference type="Proteomes" id="UP000000265">
    <property type="component" value="Chromosome"/>
</dbReference>
<dbReference type="GO" id="GO:0005886">
    <property type="term" value="C:plasma membrane"/>
    <property type="evidence" value="ECO:0007669"/>
    <property type="project" value="UniProtKB-SubCell"/>
</dbReference>
<dbReference type="GO" id="GO:0045259">
    <property type="term" value="C:proton-transporting ATP synthase complex"/>
    <property type="evidence" value="ECO:0007669"/>
    <property type="project" value="UniProtKB-KW"/>
</dbReference>
<dbReference type="GO" id="GO:0046933">
    <property type="term" value="F:proton-transporting ATP synthase activity, rotational mechanism"/>
    <property type="evidence" value="ECO:0007669"/>
    <property type="project" value="UniProtKB-UniRule"/>
</dbReference>
<dbReference type="GO" id="GO:0042777">
    <property type="term" value="P:proton motive force-driven plasma membrane ATP synthesis"/>
    <property type="evidence" value="ECO:0007669"/>
    <property type="project" value="TreeGrafter"/>
</dbReference>
<dbReference type="CDD" id="cd00310">
    <property type="entry name" value="ATP-synt_Fo_a_6"/>
    <property type="match status" value="1"/>
</dbReference>
<dbReference type="FunFam" id="1.20.120.220:FF:000002">
    <property type="entry name" value="ATP synthase subunit a"/>
    <property type="match status" value="1"/>
</dbReference>
<dbReference type="Gene3D" id="1.20.120.220">
    <property type="entry name" value="ATP synthase, F0 complex, subunit A"/>
    <property type="match status" value="1"/>
</dbReference>
<dbReference type="HAMAP" id="MF_01393">
    <property type="entry name" value="ATP_synth_a_bact"/>
    <property type="match status" value="1"/>
</dbReference>
<dbReference type="InterPro" id="IPR045082">
    <property type="entry name" value="ATP_syn_F0_a_bact/chloroplast"/>
</dbReference>
<dbReference type="InterPro" id="IPR000568">
    <property type="entry name" value="ATP_synth_F0_asu"/>
</dbReference>
<dbReference type="InterPro" id="IPR023011">
    <property type="entry name" value="ATP_synth_F0_asu_AS"/>
</dbReference>
<dbReference type="InterPro" id="IPR035908">
    <property type="entry name" value="F0_ATP_A_sf"/>
</dbReference>
<dbReference type="NCBIfam" id="TIGR01131">
    <property type="entry name" value="ATP_synt_6_or_A"/>
    <property type="match status" value="1"/>
</dbReference>
<dbReference type="NCBIfam" id="NF004477">
    <property type="entry name" value="PRK05815.1-1"/>
    <property type="match status" value="1"/>
</dbReference>
<dbReference type="PANTHER" id="PTHR42823">
    <property type="entry name" value="ATP SYNTHASE SUBUNIT A, CHLOROPLASTIC"/>
    <property type="match status" value="1"/>
</dbReference>
<dbReference type="PANTHER" id="PTHR42823:SF3">
    <property type="entry name" value="ATP SYNTHASE SUBUNIT A, CHLOROPLASTIC"/>
    <property type="match status" value="1"/>
</dbReference>
<dbReference type="Pfam" id="PF00119">
    <property type="entry name" value="ATP-synt_A"/>
    <property type="match status" value="1"/>
</dbReference>
<dbReference type="PRINTS" id="PR00123">
    <property type="entry name" value="ATPASEA"/>
</dbReference>
<dbReference type="SUPFAM" id="SSF81336">
    <property type="entry name" value="F1F0 ATP synthase subunit A"/>
    <property type="match status" value="1"/>
</dbReference>
<dbReference type="PROSITE" id="PS00449">
    <property type="entry name" value="ATPASE_A"/>
    <property type="match status" value="1"/>
</dbReference>
<reference key="1">
    <citation type="submission" date="2006-09" db="EMBL/GenBank/DDBJ databases">
        <authorList>
            <consortium name="The Klebsiella pneumonia Genome Sequencing Project"/>
            <person name="McClelland M."/>
            <person name="Sanderson E.K."/>
            <person name="Spieth J."/>
            <person name="Clifton W.S."/>
            <person name="Latreille P."/>
            <person name="Sabo A."/>
            <person name="Pepin K."/>
            <person name="Bhonagiri V."/>
            <person name="Porwollik S."/>
            <person name="Ali J."/>
            <person name="Wilson R.K."/>
        </authorList>
    </citation>
    <scope>NUCLEOTIDE SEQUENCE [LARGE SCALE GENOMIC DNA]</scope>
    <source>
        <strain>ATCC 700721 / MGH 78578</strain>
    </source>
</reference>
<name>ATP6_KLEP7</name>
<organism>
    <name type="scientific">Klebsiella pneumoniae subsp. pneumoniae (strain ATCC 700721 / MGH 78578)</name>
    <dbReference type="NCBI Taxonomy" id="272620"/>
    <lineage>
        <taxon>Bacteria</taxon>
        <taxon>Pseudomonadati</taxon>
        <taxon>Pseudomonadota</taxon>
        <taxon>Gammaproteobacteria</taxon>
        <taxon>Enterobacterales</taxon>
        <taxon>Enterobacteriaceae</taxon>
        <taxon>Klebsiella/Raoultella group</taxon>
        <taxon>Klebsiella</taxon>
        <taxon>Klebsiella pneumoniae complex</taxon>
    </lineage>
</organism>
<gene>
    <name evidence="1" type="primary">atpB</name>
    <name type="ordered locus">KPN78578_41020</name>
    <name type="ORF">KPN_04143</name>
</gene>
<feature type="chain" id="PRO_0000362334" description="ATP synthase subunit a">
    <location>
        <begin position="1"/>
        <end position="266"/>
    </location>
</feature>
<feature type="transmembrane region" description="Helical" evidence="1">
    <location>
        <begin position="33"/>
        <end position="53"/>
    </location>
</feature>
<feature type="transmembrane region" description="Helical" evidence="1">
    <location>
        <begin position="95"/>
        <end position="115"/>
    </location>
</feature>
<feature type="transmembrane region" description="Helical" evidence="1">
    <location>
        <begin position="141"/>
        <end position="161"/>
    </location>
</feature>
<feature type="transmembrane region" description="Helical" evidence="1">
    <location>
        <begin position="206"/>
        <end position="226"/>
    </location>
</feature>
<feature type="transmembrane region" description="Helical" evidence="1">
    <location>
        <begin position="237"/>
        <end position="257"/>
    </location>
</feature>
<evidence type="ECO:0000255" key="1">
    <source>
        <dbReference type="HAMAP-Rule" id="MF_01393"/>
    </source>
</evidence>
<proteinExistence type="inferred from homology"/>
<accession>A6TG42</accession>
<comment type="function">
    <text evidence="1">Key component of the proton channel; it plays a direct role in the translocation of protons across the membrane.</text>
</comment>
<comment type="subunit">
    <text evidence="1">F-type ATPases have 2 components, CF(1) - the catalytic core - and CF(0) - the membrane proton channel. CF(1) has five subunits: alpha(3), beta(3), gamma(1), delta(1), epsilon(1). CF(0) has three main subunits: a(1), b(2) and c(9-12). The alpha and beta chains form an alternating ring which encloses part of the gamma chain. CF(1) is attached to CF(0) by a central stalk formed by the gamma and epsilon chains, while a peripheral stalk is formed by the delta and b chains.</text>
</comment>
<comment type="subcellular location">
    <subcellularLocation>
        <location evidence="1">Cell inner membrane</location>
        <topology evidence="1">Multi-pass membrane protein</topology>
    </subcellularLocation>
</comment>
<comment type="similarity">
    <text evidence="1">Belongs to the ATPase A chain family.</text>
</comment>
<sequence length="266" mass="29953">MTPQDYIGHHLNNLQLDLRTFSLVDPHNHTATFWTLNIDSMFFSVVLGLLFLAMFRSVAKKATSGVPGKFQTFIEMIIGFVHGSVKDMYHGKSKVIAPLALTVFVWVFLMNLMDLLPIDLLPYIGEHIFGLPALRVVPSADVNITLSMALGVFILIIFYSIKMKGVGGFVKELTMQPFNHWAFIPVNLILEGVSLLSKPVSLGLRLFGNMYAGELIFILIAGLLPWWSQWVLNVPWAIFHILIITLQAFIFMVLTIVYLSMASEEH</sequence>